<protein>
    <recommendedName>
        <fullName evidence="1">Protein RnfH</fullName>
    </recommendedName>
</protein>
<sequence length="96" mass="10892">MSAMQVDVVYALPERQYLRTVKLEEGSTVEQAIVASGLLELRHDIDLQVNKVGIYSRAAKLADVVQDGDRVEIYRPLIADPKELRRQRAERSKSKP</sequence>
<reference key="1">
    <citation type="submission" date="2009-07" db="EMBL/GenBank/DDBJ databases">
        <title>Complete sequence of Pectobacterium carotovorum subsp. carotovorum PC1.</title>
        <authorList>
            <consortium name="US DOE Joint Genome Institute"/>
            <person name="Lucas S."/>
            <person name="Copeland A."/>
            <person name="Lapidus A."/>
            <person name="Glavina del Rio T."/>
            <person name="Tice H."/>
            <person name="Bruce D."/>
            <person name="Goodwin L."/>
            <person name="Pitluck S."/>
            <person name="Munk A.C."/>
            <person name="Brettin T."/>
            <person name="Detter J.C."/>
            <person name="Han C."/>
            <person name="Tapia R."/>
            <person name="Larimer F."/>
            <person name="Land M."/>
            <person name="Hauser L."/>
            <person name="Kyrpides N."/>
            <person name="Mikhailova N."/>
            <person name="Balakrishnan V."/>
            <person name="Glasner J."/>
            <person name="Perna N.T."/>
        </authorList>
    </citation>
    <scope>NUCLEOTIDE SEQUENCE [LARGE SCALE GENOMIC DNA]</scope>
    <source>
        <strain>PC1</strain>
    </source>
</reference>
<proteinExistence type="inferred from homology"/>
<accession>C6D972</accession>
<comment type="similarity">
    <text evidence="1">Belongs to the UPF0125 (RnfH) family.</text>
</comment>
<gene>
    <name evidence="1" type="primary">rnfH</name>
    <name type="ordered locus">PC1_0726</name>
</gene>
<evidence type="ECO:0000255" key="1">
    <source>
        <dbReference type="HAMAP-Rule" id="MF_00460"/>
    </source>
</evidence>
<dbReference type="EMBL" id="CP001657">
    <property type="protein sequence ID" value="ACT11780.1"/>
    <property type="molecule type" value="Genomic_DNA"/>
</dbReference>
<dbReference type="RefSeq" id="WP_012773424.1">
    <property type="nucleotide sequence ID" value="NC_012917.1"/>
</dbReference>
<dbReference type="SMR" id="C6D972"/>
<dbReference type="STRING" id="561230.PC1_0726"/>
<dbReference type="KEGG" id="pct:PC1_0726"/>
<dbReference type="eggNOG" id="COG2914">
    <property type="taxonomic scope" value="Bacteria"/>
</dbReference>
<dbReference type="HOGENOM" id="CLU_150721_1_0_6"/>
<dbReference type="OrthoDB" id="9796575at2"/>
<dbReference type="Proteomes" id="UP000002736">
    <property type="component" value="Chromosome"/>
</dbReference>
<dbReference type="Gene3D" id="3.10.20.280">
    <property type="entry name" value="RnfH-like"/>
    <property type="match status" value="1"/>
</dbReference>
<dbReference type="HAMAP" id="MF_00460">
    <property type="entry name" value="UPF0125_RnfH"/>
    <property type="match status" value="1"/>
</dbReference>
<dbReference type="InterPro" id="IPR016155">
    <property type="entry name" value="Mopterin_synth/thiamin_S_b"/>
</dbReference>
<dbReference type="InterPro" id="IPR005346">
    <property type="entry name" value="RnfH"/>
</dbReference>
<dbReference type="InterPro" id="IPR037021">
    <property type="entry name" value="RnfH_sf"/>
</dbReference>
<dbReference type="NCBIfam" id="NF002490">
    <property type="entry name" value="PRK01777.1"/>
    <property type="match status" value="1"/>
</dbReference>
<dbReference type="PANTHER" id="PTHR37483">
    <property type="entry name" value="UPF0125 PROTEIN RATB"/>
    <property type="match status" value="1"/>
</dbReference>
<dbReference type="PANTHER" id="PTHR37483:SF1">
    <property type="entry name" value="UPF0125 PROTEIN RATB"/>
    <property type="match status" value="1"/>
</dbReference>
<dbReference type="Pfam" id="PF03658">
    <property type="entry name" value="Ub-RnfH"/>
    <property type="match status" value="1"/>
</dbReference>
<dbReference type="SUPFAM" id="SSF54285">
    <property type="entry name" value="MoaD/ThiS"/>
    <property type="match status" value="1"/>
</dbReference>
<feature type="chain" id="PRO_1000206289" description="Protein RnfH">
    <location>
        <begin position="1"/>
        <end position="96"/>
    </location>
</feature>
<organism>
    <name type="scientific">Pectobacterium carotovorum subsp. carotovorum (strain PC1)</name>
    <dbReference type="NCBI Taxonomy" id="561230"/>
    <lineage>
        <taxon>Bacteria</taxon>
        <taxon>Pseudomonadati</taxon>
        <taxon>Pseudomonadota</taxon>
        <taxon>Gammaproteobacteria</taxon>
        <taxon>Enterobacterales</taxon>
        <taxon>Pectobacteriaceae</taxon>
        <taxon>Pectobacterium</taxon>
    </lineage>
</organism>
<name>RNFH_PECCP</name>